<protein>
    <recommendedName>
        <fullName>Phosphate acetyltransferase</fullName>
        <ecNumber>2.3.1.8</ecNumber>
    </recommendedName>
    <alternativeName>
        <fullName>Phosphotransacetylase</fullName>
    </alternativeName>
</protein>
<evidence type="ECO:0000250" key="1"/>
<evidence type="ECO:0000305" key="2"/>
<gene>
    <name type="primary">pta</name>
    <name type="ordered locus">slr2132</name>
</gene>
<dbReference type="EC" id="2.3.1.8"/>
<dbReference type="EMBL" id="BA000022">
    <property type="protein sequence ID" value="BAA17707.1"/>
    <property type="molecule type" value="Genomic_DNA"/>
</dbReference>
<dbReference type="PIR" id="S77149">
    <property type="entry name" value="S77149"/>
</dbReference>
<dbReference type="SMR" id="P73662"/>
<dbReference type="STRING" id="1148.gene:10498574"/>
<dbReference type="PaxDb" id="1148-1652788"/>
<dbReference type="EnsemblBacteria" id="BAA17707">
    <property type="protein sequence ID" value="BAA17707"/>
    <property type="gene ID" value="BAA17707"/>
</dbReference>
<dbReference type="KEGG" id="syn:slr2132"/>
<dbReference type="eggNOG" id="COG0280">
    <property type="taxonomic scope" value="Bacteria"/>
</dbReference>
<dbReference type="eggNOG" id="COG0857">
    <property type="taxonomic scope" value="Bacteria"/>
</dbReference>
<dbReference type="InParanoid" id="P73662"/>
<dbReference type="PhylomeDB" id="P73662"/>
<dbReference type="UniPathway" id="UPA00340">
    <property type="reaction ID" value="UER00459"/>
</dbReference>
<dbReference type="Proteomes" id="UP000001425">
    <property type="component" value="Chromosome"/>
</dbReference>
<dbReference type="GO" id="GO:0005737">
    <property type="term" value="C:cytoplasm"/>
    <property type="evidence" value="ECO:0007669"/>
    <property type="project" value="UniProtKB-SubCell"/>
</dbReference>
<dbReference type="GO" id="GO:0008959">
    <property type="term" value="F:phosphate acetyltransferase activity"/>
    <property type="evidence" value="ECO:0007669"/>
    <property type="project" value="UniProtKB-EC"/>
</dbReference>
<dbReference type="GO" id="GO:0006085">
    <property type="term" value="P:acetyl-CoA biosynthetic process"/>
    <property type="evidence" value="ECO:0007669"/>
    <property type="project" value="UniProtKB-UniPathway"/>
</dbReference>
<dbReference type="CDD" id="cd03109">
    <property type="entry name" value="DTBS"/>
    <property type="match status" value="1"/>
</dbReference>
<dbReference type="FunFam" id="3.40.50.10750:FF:000001">
    <property type="entry name" value="Phosphate acetyltransferase"/>
    <property type="match status" value="1"/>
</dbReference>
<dbReference type="Gene3D" id="3.40.50.10950">
    <property type="match status" value="1"/>
</dbReference>
<dbReference type="Gene3D" id="3.40.1390.20">
    <property type="entry name" value="HprK N-terminal domain-like"/>
    <property type="match status" value="1"/>
</dbReference>
<dbReference type="Gene3D" id="3.40.50.10750">
    <property type="entry name" value="Isocitrate/Isopropylmalate dehydrogenase-like"/>
    <property type="match status" value="1"/>
</dbReference>
<dbReference type="Gene3D" id="3.40.50.300">
    <property type="entry name" value="P-loop containing nucleotide triphosphate hydrolases"/>
    <property type="match status" value="1"/>
</dbReference>
<dbReference type="InterPro" id="IPR010766">
    <property type="entry name" value="DRTGG"/>
</dbReference>
<dbReference type="InterPro" id="IPR016475">
    <property type="entry name" value="P-Actrans_bac"/>
</dbReference>
<dbReference type="InterPro" id="IPR027417">
    <property type="entry name" value="P-loop_NTPase"/>
</dbReference>
<dbReference type="InterPro" id="IPR004614">
    <property type="entry name" value="P_AcTrfase"/>
</dbReference>
<dbReference type="InterPro" id="IPR042113">
    <property type="entry name" value="P_AcTrfase_dom1"/>
</dbReference>
<dbReference type="InterPro" id="IPR042112">
    <property type="entry name" value="P_AcTrfase_dom2"/>
</dbReference>
<dbReference type="InterPro" id="IPR050500">
    <property type="entry name" value="Phos_Acetyltrans/Butyryltrans"/>
</dbReference>
<dbReference type="InterPro" id="IPR002505">
    <property type="entry name" value="PTA_PTB"/>
</dbReference>
<dbReference type="InterPro" id="IPR028979">
    <property type="entry name" value="Ser_kin/Pase_Hpr-like_N_sf"/>
</dbReference>
<dbReference type="NCBIfam" id="NF004167">
    <property type="entry name" value="PRK05632.1"/>
    <property type="match status" value="1"/>
</dbReference>
<dbReference type="NCBIfam" id="NF007233">
    <property type="entry name" value="PRK09653.1"/>
    <property type="match status" value="1"/>
</dbReference>
<dbReference type="NCBIfam" id="TIGR00651">
    <property type="entry name" value="pta"/>
    <property type="match status" value="1"/>
</dbReference>
<dbReference type="PANTHER" id="PTHR43356">
    <property type="entry name" value="PHOSPHATE ACETYLTRANSFERASE"/>
    <property type="match status" value="1"/>
</dbReference>
<dbReference type="PANTHER" id="PTHR43356:SF3">
    <property type="entry name" value="PHOSPHATE ACETYLTRANSFERASE"/>
    <property type="match status" value="1"/>
</dbReference>
<dbReference type="Pfam" id="PF13500">
    <property type="entry name" value="AAA_26"/>
    <property type="match status" value="1"/>
</dbReference>
<dbReference type="Pfam" id="PF07085">
    <property type="entry name" value="DRTGG"/>
    <property type="match status" value="1"/>
</dbReference>
<dbReference type="Pfam" id="PF01515">
    <property type="entry name" value="PTA_PTB"/>
    <property type="match status" value="1"/>
</dbReference>
<dbReference type="PIRSF" id="PIRSF006107">
    <property type="entry name" value="PhpActrans_proteobac"/>
    <property type="match status" value="1"/>
</dbReference>
<dbReference type="SUPFAM" id="SSF75138">
    <property type="entry name" value="HprK N-terminal domain-like"/>
    <property type="match status" value="1"/>
</dbReference>
<dbReference type="SUPFAM" id="SSF53659">
    <property type="entry name" value="Isocitrate/Isopropylmalate dehydrogenase-like"/>
    <property type="match status" value="1"/>
</dbReference>
<dbReference type="SUPFAM" id="SSF52540">
    <property type="entry name" value="P-loop containing nucleoside triphosphate hydrolases"/>
    <property type="match status" value="1"/>
</dbReference>
<accession>P73662</accession>
<comment type="function">
    <text evidence="1">Involved in acetate metabolism.</text>
</comment>
<comment type="catalytic activity">
    <reaction>
        <text>acetyl-CoA + phosphate = acetyl phosphate + CoA</text>
        <dbReference type="Rhea" id="RHEA:19521"/>
        <dbReference type="ChEBI" id="CHEBI:22191"/>
        <dbReference type="ChEBI" id="CHEBI:43474"/>
        <dbReference type="ChEBI" id="CHEBI:57287"/>
        <dbReference type="ChEBI" id="CHEBI:57288"/>
        <dbReference type="EC" id="2.3.1.8"/>
    </reaction>
</comment>
<comment type="pathway">
    <text>Metabolic intermediate biosynthesis; acetyl-CoA biosynthesis; acetyl-CoA from acetate: step 2/2.</text>
</comment>
<comment type="subcellular location">
    <subcellularLocation>
        <location evidence="2">Cytoplasm</location>
    </subcellularLocation>
</comment>
<comment type="domain">
    <text evidence="1">The N-terminal region seems to be important for proper quaternary structure. The C-terminal region contains the substrate-binding site (By similarity).</text>
</comment>
<comment type="similarity">
    <text evidence="2">In the N-terminal section; belongs to the CobB/CobQ family.</text>
</comment>
<comment type="similarity">
    <text evidence="2">In the C-terminal section; belongs to the phosphate acetyltransferase and butyryltransferase family.</text>
</comment>
<proteinExistence type="inferred from homology"/>
<organism>
    <name type="scientific">Synechocystis sp. (strain ATCC 27184 / PCC 6803 / Kazusa)</name>
    <dbReference type="NCBI Taxonomy" id="1111708"/>
    <lineage>
        <taxon>Bacteria</taxon>
        <taxon>Bacillati</taxon>
        <taxon>Cyanobacteriota</taxon>
        <taxon>Cyanophyceae</taxon>
        <taxon>Synechococcales</taxon>
        <taxon>Merismopediaceae</taxon>
        <taxon>Synechocystis</taxon>
    </lineage>
</organism>
<keyword id="KW-0012">Acyltransferase</keyword>
<keyword id="KW-0963">Cytoplasm</keyword>
<keyword id="KW-1185">Reference proteome</keyword>
<keyword id="KW-0808">Transferase</keyword>
<sequence>MTSSLYLSTTEARSGKSLVVLGILDLILKKTTRIAYFRPIIQDPVNGKHDNNIILVLENFRLQQTYTDSFGLYFHEAVSLASDGAIDQVLDRILAKYRHLADQVDFILCEGSDYLGEESAFEFDLNTTIAKMLNCPILLLGNAMGNTIADSLQPIDMALNSYDQESCQVVGVIINRVQPELATEIQAQLEQRYGDRPMVLGTIPQDIMLKSLRLREIVSGLNAQVLSGADLLDNLVYHHLVVAMHIAHALHWLHEKNTLIITPGDRGDIILGVMQAHRSLNYPSIAGILLTADYHPEPAIMKLIEGLPDAPPLLLTSTHTHETSARLETLHPALSPTDNYKIRHSIALFQQQIDGEKLLNYLKTIRSKGITPKLFLYNLVQAATAAQRHIVLPEGEEIRILKAAASLINHGIVRLTLLGNIEAIEQTVKINHIDLDLSKVRLINPKTSPDRERYAETYYQLRKHKGVTLAMARDILTDISYFGTMMVHLGEADGMVSGSVNTTQHTVRPALQIIKTQPGFSLVSSVFFMCLEDRVLVYGDCAVNPDPNAEQLAEIALTSAATAKNFGIEPRVALLSYSSGSSGQGADVEKVRQATAIAKEREPDLALEGPIQYDAAVDSTVAAQKMPGSAVAGKATVFIFPDLNTGNNTYKAVQRETKAIAIGPILQGLNKPVNDLSRGCLVEDIINTVVITALQVK</sequence>
<reference key="1">
    <citation type="journal article" date="1996" name="DNA Res.">
        <title>Sequence analysis of the genome of the unicellular cyanobacterium Synechocystis sp. strain PCC6803. II. Sequence determination of the entire genome and assignment of potential protein-coding regions.</title>
        <authorList>
            <person name="Kaneko T."/>
            <person name="Sato S."/>
            <person name="Kotani H."/>
            <person name="Tanaka A."/>
            <person name="Asamizu E."/>
            <person name="Nakamura Y."/>
            <person name="Miyajima N."/>
            <person name="Hirosawa M."/>
            <person name="Sugiura M."/>
            <person name="Sasamoto S."/>
            <person name="Kimura T."/>
            <person name="Hosouchi T."/>
            <person name="Matsuno A."/>
            <person name="Muraki A."/>
            <person name="Nakazaki N."/>
            <person name="Naruo K."/>
            <person name="Okumura S."/>
            <person name="Shimpo S."/>
            <person name="Takeuchi C."/>
            <person name="Wada T."/>
            <person name="Watanabe A."/>
            <person name="Yamada M."/>
            <person name="Yasuda M."/>
            <person name="Tabata S."/>
        </authorList>
    </citation>
    <scope>NUCLEOTIDE SEQUENCE [LARGE SCALE GENOMIC DNA]</scope>
    <source>
        <strain>ATCC 27184 / PCC 6803 / Kazusa</strain>
    </source>
</reference>
<feature type="chain" id="PRO_0000179148" description="Phosphate acetyltransferase">
    <location>
        <begin position="1"/>
        <end position="697"/>
    </location>
</feature>
<feature type="region of interest" description="Phosphate acetyltransferase">
    <location>
        <begin position="374"/>
        <end position="697"/>
    </location>
</feature>
<name>PTA_SYNY3</name>